<accession>A4VKK1</accession>
<comment type="function">
    <text evidence="1">Catalyzes a salvage reaction resulting in the formation of AMP, that is energically less costly than de novo synthesis.</text>
</comment>
<comment type="catalytic activity">
    <reaction evidence="1">
        <text>AMP + diphosphate = 5-phospho-alpha-D-ribose 1-diphosphate + adenine</text>
        <dbReference type="Rhea" id="RHEA:16609"/>
        <dbReference type="ChEBI" id="CHEBI:16708"/>
        <dbReference type="ChEBI" id="CHEBI:33019"/>
        <dbReference type="ChEBI" id="CHEBI:58017"/>
        <dbReference type="ChEBI" id="CHEBI:456215"/>
        <dbReference type="EC" id="2.4.2.7"/>
    </reaction>
</comment>
<comment type="pathway">
    <text evidence="1">Purine metabolism; AMP biosynthesis via salvage pathway; AMP from adenine: step 1/1.</text>
</comment>
<comment type="subunit">
    <text evidence="1">Homodimer.</text>
</comment>
<comment type="subcellular location">
    <subcellularLocation>
        <location evidence="1">Cytoplasm</location>
    </subcellularLocation>
</comment>
<comment type="similarity">
    <text evidence="1">Belongs to the purine/pyrimidine phosphoribosyltransferase family.</text>
</comment>
<proteinExistence type="inferred from homology"/>
<feature type="chain" id="PRO_1000000331" description="Adenine phosphoribosyltransferase">
    <location>
        <begin position="1"/>
        <end position="182"/>
    </location>
</feature>
<name>APT_STUS1</name>
<reference key="1">
    <citation type="journal article" date="2008" name="Proc. Natl. Acad. Sci. U.S.A.">
        <title>Nitrogen fixation island and rhizosphere competence traits in the genome of root-associated Pseudomonas stutzeri A1501.</title>
        <authorList>
            <person name="Yan Y."/>
            <person name="Yang J."/>
            <person name="Dou Y."/>
            <person name="Chen M."/>
            <person name="Ping S."/>
            <person name="Peng J."/>
            <person name="Lu W."/>
            <person name="Zhang W."/>
            <person name="Yao Z."/>
            <person name="Li H."/>
            <person name="Liu W."/>
            <person name="He S."/>
            <person name="Geng L."/>
            <person name="Zhang X."/>
            <person name="Yang F."/>
            <person name="Yu H."/>
            <person name="Zhan Y."/>
            <person name="Li D."/>
            <person name="Lin Z."/>
            <person name="Wang Y."/>
            <person name="Elmerich C."/>
            <person name="Lin M."/>
            <person name="Jin Q."/>
        </authorList>
    </citation>
    <scope>NUCLEOTIDE SEQUENCE [LARGE SCALE GENOMIC DNA]</scope>
    <source>
        <strain>A1501</strain>
    </source>
</reference>
<dbReference type="EC" id="2.4.2.7" evidence="1"/>
<dbReference type="EMBL" id="CP000304">
    <property type="protein sequence ID" value="ABP79502.1"/>
    <property type="molecule type" value="Genomic_DNA"/>
</dbReference>
<dbReference type="RefSeq" id="WP_011912979.1">
    <property type="nucleotide sequence ID" value="NC_009434.1"/>
</dbReference>
<dbReference type="SMR" id="A4VKK1"/>
<dbReference type="KEGG" id="psa:PST_1828"/>
<dbReference type="eggNOG" id="COG0503">
    <property type="taxonomic scope" value="Bacteria"/>
</dbReference>
<dbReference type="HOGENOM" id="CLU_063339_3_0_6"/>
<dbReference type="UniPathway" id="UPA00588">
    <property type="reaction ID" value="UER00646"/>
</dbReference>
<dbReference type="Proteomes" id="UP000000233">
    <property type="component" value="Chromosome"/>
</dbReference>
<dbReference type="GO" id="GO:0005737">
    <property type="term" value="C:cytoplasm"/>
    <property type="evidence" value="ECO:0007669"/>
    <property type="project" value="UniProtKB-SubCell"/>
</dbReference>
<dbReference type="GO" id="GO:0002055">
    <property type="term" value="F:adenine binding"/>
    <property type="evidence" value="ECO:0007669"/>
    <property type="project" value="TreeGrafter"/>
</dbReference>
<dbReference type="GO" id="GO:0003999">
    <property type="term" value="F:adenine phosphoribosyltransferase activity"/>
    <property type="evidence" value="ECO:0007669"/>
    <property type="project" value="UniProtKB-UniRule"/>
</dbReference>
<dbReference type="GO" id="GO:0016208">
    <property type="term" value="F:AMP binding"/>
    <property type="evidence" value="ECO:0007669"/>
    <property type="project" value="TreeGrafter"/>
</dbReference>
<dbReference type="GO" id="GO:0006168">
    <property type="term" value="P:adenine salvage"/>
    <property type="evidence" value="ECO:0007669"/>
    <property type="project" value="InterPro"/>
</dbReference>
<dbReference type="GO" id="GO:0044209">
    <property type="term" value="P:AMP salvage"/>
    <property type="evidence" value="ECO:0007669"/>
    <property type="project" value="UniProtKB-UniRule"/>
</dbReference>
<dbReference type="GO" id="GO:0006166">
    <property type="term" value="P:purine ribonucleoside salvage"/>
    <property type="evidence" value="ECO:0007669"/>
    <property type="project" value="UniProtKB-KW"/>
</dbReference>
<dbReference type="CDD" id="cd06223">
    <property type="entry name" value="PRTases_typeI"/>
    <property type="match status" value="1"/>
</dbReference>
<dbReference type="FunFam" id="3.40.50.2020:FF:000021">
    <property type="entry name" value="Adenine phosphoribosyltransferase"/>
    <property type="match status" value="1"/>
</dbReference>
<dbReference type="Gene3D" id="3.40.50.2020">
    <property type="match status" value="1"/>
</dbReference>
<dbReference type="HAMAP" id="MF_00004">
    <property type="entry name" value="Aden_phosphoribosyltr"/>
    <property type="match status" value="1"/>
</dbReference>
<dbReference type="InterPro" id="IPR005764">
    <property type="entry name" value="Ade_phspho_trans"/>
</dbReference>
<dbReference type="InterPro" id="IPR000836">
    <property type="entry name" value="PRibTrfase_dom"/>
</dbReference>
<dbReference type="InterPro" id="IPR029057">
    <property type="entry name" value="PRTase-like"/>
</dbReference>
<dbReference type="InterPro" id="IPR050054">
    <property type="entry name" value="UPRTase/APRTase"/>
</dbReference>
<dbReference type="NCBIfam" id="TIGR01090">
    <property type="entry name" value="apt"/>
    <property type="match status" value="1"/>
</dbReference>
<dbReference type="NCBIfam" id="NF002634">
    <property type="entry name" value="PRK02304.1-3"/>
    <property type="match status" value="1"/>
</dbReference>
<dbReference type="NCBIfam" id="NF002636">
    <property type="entry name" value="PRK02304.1-5"/>
    <property type="match status" value="1"/>
</dbReference>
<dbReference type="PANTHER" id="PTHR32315">
    <property type="entry name" value="ADENINE PHOSPHORIBOSYLTRANSFERASE"/>
    <property type="match status" value="1"/>
</dbReference>
<dbReference type="PANTHER" id="PTHR32315:SF3">
    <property type="entry name" value="ADENINE PHOSPHORIBOSYLTRANSFERASE"/>
    <property type="match status" value="1"/>
</dbReference>
<dbReference type="Pfam" id="PF00156">
    <property type="entry name" value="Pribosyltran"/>
    <property type="match status" value="1"/>
</dbReference>
<dbReference type="SUPFAM" id="SSF53271">
    <property type="entry name" value="PRTase-like"/>
    <property type="match status" value="1"/>
</dbReference>
<dbReference type="PROSITE" id="PS00103">
    <property type="entry name" value="PUR_PYR_PR_TRANSFER"/>
    <property type="match status" value="1"/>
</dbReference>
<sequence>MIFDEFSIKTLIRPVPDFPRPGVIFRDITPLFQSPKALRMVADSFIQRYVEADFTHIGALDARGFLVGSILAYELNKPLVLFRKQGKLPADVLSQAYCTEYGEAHLEIHADSLCEGDSVLLFDDLIATGGTLLAAAQLVRRMRASIHEAAAIIDLPELGGSQKLQDIGIPTFTLTAFELSDR</sequence>
<evidence type="ECO:0000255" key="1">
    <source>
        <dbReference type="HAMAP-Rule" id="MF_00004"/>
    </source>
</evidence>
<gene>
    <name evidence="1" type="primary">apt</name>
    <name type="ordered locus">PST_1828</name>
</gene>
<protein>
    <recommendedName>
        <fullName evidence="1">Adenine phosphoribosyltransferase</fullName>
        <shortName evidence="1">APRT</shortName>
        <ecNumber evidence="1">2.4.2.7</ecNumber>
    </recommendedName>
</protein>
<organism>
    <name type="scientific">Stutzerimonas stutzeri (strain A1501)</name>
    <name type="common">Pseudomonas stutzeri</name>
    <dbReference type="NCBI Taxonomy" id="379731"/>
    <lineage>
        <taxon>Bacteria</taxon>
        <taxon>Pseudomonadati</taxon>
        <taxon>Pseudomonadota</taxon>
        <taxon>Gammaproteobacteria</taxon>
        <taxon>Pseudomonadales</taxon>
        <taxon>Pseudomonadaceae</taxon>
        <taxon>Stutzerimonas</taxon>
    </lineage>
</organism>
<keyword id="KW-0963">Cytoplasm</keyword>
<keyword id="KW-0328">Glycosyltransferase</keyword>
<keyword id="KW-0660">Purine salvage</keyword>
<keyword id="KW-1185">Reference proteome</keyword>
<keyword id="KW-0808">Transferase</keyword>